<proteinExistence type="inferred from homology"/>
<gene>
    <name type="ordered locus">SAR0931</name>
</gene>
<feature type="chain" id="PRO_0000105896" description="UPF0344 protein SAR0931">
    <location>
        <begin position="1"/>
        <end position="129"/>
    </location>
</feature>
<feature type="transmembrane region" description="Helical" evidence="1">
    <location>
        <begin position="1"/>
        <end position="21"/>
    </location>
</feature>
<feature type="transmembrane region" description="Helical" evidence="1">
    <location>
        <begin position="36"/>
        <end position="56"/>
    </location>
</feature>
<feature type="transmembrane region" description="Helical" evidence="1">
    <location>
        <begin position="67"/>
        <end position="87"/>
    </location>
</feature>
<feature type="transmembrane region" description="Helical" evidence="1">
    <location>
        <begin position="99"/>
        <end position="119"/>
    </location>
</feature>
<comment type="subcellular location">
    <subcellularLocation>
        <location evidence="1">Cell membrane</location>
        <topology evidence="1">Multi-pass membrane protein</topology>
    </subcellularLocation>
</comment>
<comment type="similarity">
    <text evidence="1">Belongs to the UPF0344 family.</text>
</comment>
<name>Y931_STAAR</name>
<reference key="1">
    <citation type="journal article" date="2004" name="Proc. Natl. Acad. Sci. U.S.A.">
        <title>Complete genomes of two clinical Staphylococcus aureus strains: evidence for the rapid evolution of virulence and drug resistance.</title>
        <authorList>
            <person name="Holden M.T.G."/>
            <person name="Feil E.J."/>
            <person name="Lindsay J.A."/>
            <person name="Peacock S.J."/>
            <person name="Day N.P.J."/>
            <person name="Enright M.C."/>
            <person name="Foster T.J."/>
            <person name="Moore C.E."/>
            <person name="Hurst L."/>
            <person name="Atkin R."/>
            <person name="Barron A."/>
            <person name="Bason N."/>
            <person name="Bentley S.D."/>
            <person name="Chillingworth C."/>
            <person name="Chillingworth T."/>
            <person name="Churcher C."/>
            <person name="Clark L."/>
            <person name="Corton C."/>
            <person name="Cronin A."/>
            <person name="Doggett J."/>
            <person name="Dowd L."/>
            <person name="Feltwell T."/>
            <person name="Hance Z."/>
            <person name="Harris B."/>
            <person name="Hauser H."/>
            <person name="Holroyd S."/>
            <person name="Jagels K."/>
            <person name="James K.D."/>
            <person name="Lennard N."/>
            <person name="Line A."/>
            <person name="Mayes R."/>
            <person name="Moule S."/>
            <person name="Mungall K."/>
            <person name="Ormond D."/>
            <person name="Quail M.A."/>
            <person name="Rabbinowitsch E."/>
            <person name="Rutherford K.M."/>
            <person name="Sanders M."/>
            <person name="Sharp S."/>
            <person name="Simmonds M."/>
            <person name="Stevens K."/>
            <person name="Whitehead S."/>
            <person name="Barrell B.G."/>
            <person name="Spratt B.G."/>
            <person name="Parkhill J."/>
        </authorList>
    </citation>
    <scope>NUCLEOTIDE SEQUENCE [LARGE SCALE GENOMIC DNA]</scope>
    <source>
        <strain>MRSA252</strain>
    </source>
</reference>
<sequence length="129" mass="14456">MLHLHILSWVLAIILFIATYLNISKNQGGTPYFKPLHMVLRLFMLLTLISGFWILIQSFMNGGANHMLLTLKMLCGVAVVGLMEVSIAKRKRHEQSHTMFWITIALIIITMVLGVILPLGPISKLFGIG</sequence>
<keyword id="KW-1003">Cell membrane</keyword>
<keyword id="KW-0472">Membrane</keyword>
<keyword id="KW-0812">Transmembrane</keyword>
<keyword id="KW-1133">Transmembrane helix</keyword>
<accession>Q6GIB9</accession>
<protein>
    <recommendedName>
        <fullName evidence="1">UPF0344 protein SAR0931</fullName>
    </recommendedName>
</protein>
<dbReference type="EMBL" id="BX571856">
    <property type="protein sequence ID" value="CAG39937.1"/>
    <property type="molecule type" value="Genomic_DNA"/>
</dbReference>
<dbReference type="RefSeq" id="WP_000902813.1">
    <property type="nucleotide sequence ID" value="NC_002952.2"/>
</dbReference>
<dbReference type="KEGG" id="sar:SAR0931"/>
<dbReference type="HOGENOM" id="CLU_146641_2_0_9"/>
<dbReference type="Proteomes" id="UP000000596">
    <property type="component" value="Chromosome"/>
</dbReference>
<dbReference type="GO" id="GO:0005886">
    <property type="term" value="C:plasma membrane"/>
    <property type="evidence" value="ECO:0007669"/>
    <property type="project" value="UniProtKB-SubCell"/>
</dbReference>
<dbReference type="HAMAP" id="MF_01536">
    <property type="entry name" value="UPF0344"/>
    <property type="match status" value="1"/>
</dbReference>
<dbReference type="InterPro" id="IPR010899">
    <property type="entry name" value="UPF0344"/>
</dbReference>
<dbReference type="NCBIfam" id="NF010195">
    <property type="entry name" value="PRK13673.1-2"/>
    <property type="match status" value="1"/>
</dbReference>
<dbReference type="NCBIfam" id="NF010199">
    <property type="entry name" value="PRK13673.1-6"/>
    <property type="match status" value="1"/>
</dbReference>
<dbReference type="Pfam" id="PF07457">
    <property type="entry name" value="DUF1516"/>
    <property type="match status" value="1"/>
</dbReference>
<evidence type="ECO:0000255" key="1">
    <source>
        <dbReference type="HAMAP-Rule" id="MF_01536"/>
    </source>
</evidence>
<organism>
    <name type="scientific">Staphylococcus aureus (strain MRSA252)</name>
    <dbReference type="NCBI Taxonomy" id="282458"/>
    <lineage>
        <taxon>Bacteria</taxon>
        <taxon>Bacillati</taxon>
        <taxon>Bacillota</taxon>
        <taxon>Bacilli</taxon>
        <taxon>Bacillales</taxon>
        <taxon>Staphylococcaceae</taxon>
        <taxon>Staphylococcus</taxon>
    </lineage>
</organism>